<name>SYI_PECCP</name>
<gene>
    <name evidence="1" type="primary">ileS</name>
    <name type="ordered locus">PC1_3653</name>
</gene>
<dbReference type="EC" id="6.1.1.5" evidence="1"/>
<dbReference type="EMBL" id="CP001657">
    <property type="protein sequence ID" value="ACT14668.1"/>
    <property type="molecule type" value="Genomic_DNA"/>
</dbReference>
<dbReference type="RefSeq" id="WP_015841784.1">
    <property type="nucleotide sequence ID" value="NC_012917.1"/>
</dbReference>
<dbReference type="SMR" id="C6DF04"/>
<dbReference type="STRING" id="561230.PC1_3653"/>
<dbReference type="KEGG" id="pct:PC1_3653"/>
<dbReference type="eggNOG" id="COG0060">
    <property type="taxonomic scope" value="Bacteria"/>
</dbReference>
<dbReference type="HOGENOM" id="CLU_001493_7_1_6"/>
<dbReference type="OrthoDB" id="9810365at2"/>
<dbReference type="Proteomes" id="UP000002736">
    <property type="component" value="Chromosome"/>
</dbReference>
<dbReference type="GO" id="GO:0005829">
    <property type="term" value="C:cytosol"/>
    <property type="evidence" value="ECO:0007669"/>
    <property type="project" value="TreeGrafter"/>
</dbReference>
<dbReference type="GO" id="GO:0002161">
    <property type="term" value="F:aminoacyl-tRNA deacylase activity"/>
    <property type="evidence" value="ECO:0007669"/>
    <property type="project" value="InterPro"/>
</dbReference>
<dbReference type="GO" id="GO:0005524">
    <property type="term" value="F:ATP binding"/>
    <property type="evidence" value="ECO:0007669"/>
    <property type="project" value="UniProtKB-UniRule"/>
</dbReference>
<dbReference type="GO" id="GO:0004822">
    <property type="term" value="F:isoleucine-tRNA ligase activity"/>
    <property type="evidence" value="ECO:0007669"/>
    <property type="project" value="UniProtKB-UniRule"/>
</dbReference>
<dbReference type="GO" id="GO:0000049">
    <property type="term" value="F:tRNA binding"/>
    <property type="evidence" value="ECO:0007669"/>
    <property type="project" value="InterPro"/>
</dbReference>
<dbReference type="GO" id="GO:0008270">
    <property type="term" value="F:zinc ion binding"/>
    <property type="evidence" value="ECO:0007669"/>
    <property type="project" value="UniProtKB-UniRule"/>
</dbReference>
<dbReference type="GO" id="GO:0006428">
    <property type="term" value="P:isoleucyl-tRNA aminoacylation"/>
    <property type="evidence" value="ECO:0007669"/>
    <property type="project" value="UniProtKB-UniRule"/>
</dbReference>
<dbReference type="CDD" id="cd07960">
    <property type="entry name" value="Anticodon_Ia_Ile_BEm"/>
    <property type="match status" value="1"/>
</dbReference>
<dbReference type="CDD" id="cd00818">
    <property type="entry name" value="IleRS_core"/>
    <property type="match status" value="1"/>
</dbReference>
<dbReference type="FunFam" id="1.10.730.20:FF:000001">
    <property type="entry name" value="Isoleucine--tRNA ligase"/>
    <property type="match status" value="1"/>
</dbReference>
<dbReference type="FunFam" id="3.40.50.620:FF:000042">
    <property type="entry name" value="Isoleucine--tRNA ligase"/>
    <property type="match status" value="1"/>
</dbReference>
<dbReference type="FunFam" id="3.40.50.620:FF:000048">
    <property type="entry name" value="Isoleucine--tRNA ligase"/>
    <property type="match status" value="1"/>
</dbReference>
<dbReference type="FunFam" id="3.90.740.10:FF:000002">
    <property type="entry name" value="Isoleucine--tRNA ligase"/>
    <property type="match status" value="1"/>
</dbReference>
<dbReference type="Gene3D" id="1.10.730.20">
    <property type="match status" value="1"/>
</dbReference>
<dbReference type="Gene3D" id="3.40.50.620">
    <property type="entry name" value="HUPs"/>
    <property type="match status" value="2"/>
</dbReference>
<dbReference type="Gene3D" id="3.90.740.10">
    <property type="entry name" value="Valyl/Leucyl/Isoleucyl-tRNA synthetase, editing domain"/>
    <property type="match status" value="1"/>
</dbReference>
<dbReference type="HAMAP" id="MF_02002">
    <property type="entry name" value="Ile_tRNA_synth_type1"/>
    <property type="match status" value="1"/>
</dbReference>
<dbReference type="InterPro" id="IPR001412">
    <property type="entry name" value="aa-tRNA-synth_I_CS"/>
</dbReference>
<dbReference type="InterPro" id="IPR002300">
    <property type="entry name" value="aa-tRNA-synth_Ia"/>
</dbReference>
<dbReference type="InterPro" id="IPR033708">
    <property type="entry name" value="Anticodon_Ile_BEm"/>
</dbReference>
<dbReference type="InterPro" id="IPR002301">
    <property type="entry name" value="Ile-tRNA-ligase"/>
</dbReference>
<dbReference type="InterPro" id="IPR023585">
    <property type="entry name" value="Ile-tRNA-ligase_type1"/>
</dbReference>
<dbReference type="InterPro" id="IPR050081">
    <property type="entry name" value="Ile-tRNA_ligase"/>
</dbReference>
<dbReference type="InterPro" id="IPR013155">
    <property type="entry name" value="M/V/L/I-tRNA-synth_anticd-bd"/>
</dbReference>
<dbReference type="InterPro" id="IPR014729">
    <property type="entry name" value="Rossmann-like_a/b/a_fold"/>
</dbReference>
<dbReference type="InterPro" id="IPR009080">
    <property type="entry name" value="tRNAsynth_Ia_anticodon-bd"/>
</dbReference>
<dbReference type="InterPro" id="IPR009008">
    <property type="entry name" value="Val/Leu/Ile-tRNA-synth_edit"/>
</dbReference>
<dbReference type="InterPro" id="IPR010663">
    <property type="entry name" value="Znf_FPG/IleRS"/>
</dbReference>
<dbReference type="NCBIfam" id="TIGR00392">
    <property type="entry name" value="ileS"/>
    <property type="match status" value="1"/>
</dbReference>
<dbReference type="PANTHER" id="PTHR42765:SF1">
    <property type="entry name" value="ISOLEUCINE--TRNA LIGASE, MITOCHONDRIAL"/>
    <property type="match status" value="1"/>
</dbReference>
<dbReference type="PANTHER" id="PTHR42765">
    <property type="entry name" value="SOLEUCYL-TRNA SYNTHETASE"/>
    <property type="match status" value="1"/>
</dbReference>
<dbReference type="Pfam" id="PF08264">
    <property type="entry name" value="Anticodon_1"/>
    <property type="match status" value="1"/>
</dbReference>
<dbReference type="Pfam" id="PF00133">
    <property type="entry name" value="tRNA-synt_1"/>
    <property type="match status" value="1"/>
</dbReference>
<dbReference type="Pfam" id="PF06827">
    <property type="entry name" value="zf-FPG_IleRS"/>
    <property type="match status" value="1"/>
</dbReference>
<dbReference type="PRINTS" id="PR00984">
    <property type="entry name" value="TRNASYNTHILE"/>
</dbReference>
<dbReference type="SUPFAM" id="SSF47323">
    <property type="entry name" value="Anticodon-binding domain of a subclass of class I aminoacyl-tRNA synthetases"/>
    <property type="match status" value="1"/>
</dbReference>
<dbReference type="SUPFAM" id="SSF52374">
    <property type="entry name" value="Nucleotidylyl transferase"/>
    <property type="match status" value="1"/>
</dbReference>
<dbReference type="SUPFAM" id="SSF50677">
    <property type="entry name" value="ValRS/IleRS/LeuRS editing domain"/>
    <property type="match status" value="1"/>
</dbReference>
<dbReference type="PROSITE" id="PS00178">
    <property type="entry name" value="AA_TRNA_LIGASE_I"/>
    <property type="match status" value="1"/>
</dbReference>
<sequence length="937" mass="104502">MSDYKTTLNLPETGFPMRGDLAKREPDMLKRWYEQDLYGIIRNAKKGKKTFILHDGPPYANGSIHIGHSVNKILKDIIVKSKGLSGYDSPYVPGWDCHGLPIELKVEQLIGKPGEKVSAAEFRAECRKYAAEQVAGQKADFIRLGVLGDWDRPYLTMDFKTEANIIRALGRIIENGHLHKGAKPVHWCADCGSALAEAEVEYYDKTSPSIDVAFNASDVAAVLAKFGVSSVDGPVSLVIWTTTPWTLPANRAISLNAEFDYQLVQIDGQALILAADLVESVMKRAGVTQWTVLGDCKGADLELLRFKHPFLSFDVPAILGDHVTLDAGTGAVHTAGGHGPDDYVISQKYNLEIANPVGPNGCYLSGTYPELDGKFVFKANDLIVEILREKGMLLHVEKLQHSYPCCWRHKSPIIFRATPQWFVSMDQKGLRKQSLSEIKGVQWIPDWGQARIEAMVANRPDWCISRQRTWGVPMSLFVHKETEELHPRTAELIEAVAKRVEADGIQAWWDLDPADVLGADADNYVKVPDTLDVWFDSGSTHASVVDVRPEFGGHAADMYLEGSDQHRGWFMSSLMISTAIKGKAPYRQVLTHGFTVDGQGRKMSKSIGNTVSPQDVMNKLGADILRLWIGSTDYSGEIAVSDEILKRSADAYRRIRNTARFLLANLNGFDPQKDSVKPEDMVVLDRWAVGCAKAAQEEILEAYESYDFHRVVQRLMQFCSIEMGSFYLDIIKDRQYTAKSDSVARRSCQTALYHISEALVRWMAPIMSFTADEIWSYLPGKRAQYVFTEEWYDGLFGLDASETMNDAFWADILKVRSEVNKVIEQARNDKRIGGSLEASVTLYADANLAGKLNQLRQELHFALLTSKALVERYENAPDSAQATELTGLKIALSEAEGHKCPRCWHYETDIGSNADHPEVCGRCATNVGGNGEERKFV</sequence>
<accession>C6DF04</accession>
<organism>
    <name type="scientific">Pectobacterium carotovorum subsp. carotovorum (strain PC1)</name>
    <dbReference type="NCBI Taxonomy" id="561230"/>
    <lineage>
        <taxon>Bacteria</taxon>
        <taxon>Pseudomonadati</taxon>
        <taxon>Pseudomonadota</taxon>
        <taxon>Gammaproteobacteria</taxon>
        <taxon>Enterobacterales</taxon>
        <taxon>Pectobacteriaceae</taxon>
        <taxon>Pectobacterium</taxon>
    </lineage>
</organism>
<feature type="chain" id="PRO_1000216242" description="Isoleucine--tRNA ligase">
    <location>
        <begin position="1"/>
        <end position="937"/>
    </location>
</feature>
<feature type="short sequence motif" description="'HIGH' region">
    <location>
        <begin position="58"/>
        <end position="68"/>
    </location>
</feature>
<feature type="short sequence motif" description="'KMSKS' region">
    <location>
        <begin position="602"/>
        <end position="606"/>
    </location>
</feature>
<feature type="binding site" evidence="1">
    <location>
        <position position="561"/>
    </location>
    <ligand>
        <name>L-isoleucyl-5'-AMP</name>
        <dbReference type="ChEBI" id="CHEBI:178002"/>
    </ligand>
</feature>
<feature type="binding site" evidence="1">
    <location>
        <position position="605"/>
    </location>
    <ligand>
        <name>ATP</name>
        <dbReference type="ChEBI" id="CHEBI:30616"/>
    </ligand>
</feature>
<feature type="binding site" evidence="1">
    <location>
        <position position="900"/>
    </location>
    <ligand>
        <name>Zn(2+)</name>
        <dbReference type="ChEBI" id="CHEBI:29105"/>
    </ligand>
</feature>
<feature type="binding site" evidence="1">
    <location>
        <position position="903"/>
    </location>
    <ligand>
        <name>Zn(2+)</name>
        <dbReference type="ChEBI" id="CHEBI:29105"/>
    </ligand>
</feature>
<feature type="binding site" evidence="1">
    <location>
        <position position="920"/>
    </location>
    <ligand>
        <name>Zn(2+)</name>
        <dbReference type="ChEBI" id="CHEBI:29105"/>
    </ligand>
</feature>
<feature type="binding site" evidence="1">
    <location>
        <position position="923"/>
    </location>
    <ligand>
        <name>Zn(2+)</name>
        <dbReference type="ChEBI" id="CHEBI:29105"/>
    </ligand>
</feature>
<reference key="1">
    <citation type="submission" date="2009-07" db="EMBL/GenBank/DDBJ databases">
        <title>Complete sequence of Pectobacterium carotovorum subsp. carotovorum PC1.</title>
        <authorList>
            <consortium name="US DOE Joint Genome Institute"/>
            <person name="Lucas S."/>
            <person name="Copeland A."/>
            <person name="Lapidus A."/>
            <person name="Glavina del Rio T."/>
            <person name="Tice H."/>
            <person name="Bruce D."/>
            <person name="Goodwin L."/>
            <person name="Pitluck S."/>
            <person name="Munk A.C."/>
            <person name="Brettin T."/>
            <person name="Detter J.C."/>
            <person name="Han C."/>
            <person name="Tapia R."/>
            <person name="Larimer F."/>
            <person name="Land M."/>
            <person name="Hauser L."/>
            <person name="Kyrpides N."/>
            <person name="Mikhailova N."/>
            <person name="Balakrishnan V."/>
            <person name="Glasner J."/>
            <person name="Perna N.T."/>
        </authorList>
    </citation>
    <scope>NUCLEOTIDE SEQUENCE [LARGE SCALE GENOMIC DNA]</scope>
    <source>
        <strain>PC1</strain>
    </source>
</reference>
<evidence type="ECO:0000255" key="1">
    <source>
        <dbReference type="HAMAP-Rule" id="MF_02002"/>
    </source>
</evidence>
<comment type="function">
    <text evidence="1">Catalyzes the attachment of isoleucine to tRNA(Ile). As IleRS can inadvertently accommodate and process structurally similar amino acids such as valine, to avoid such errors it has two additional distinct tRNA(Ile)-dependent editing activities. One activity is designated as 'pretransfer' editing and involves the hydrolysis of activated Val-AMP. The other activity is designated 'posttransfer' editing and involves deacylation of mischarged Val-tRNA(Ile).</text>
</comment>
<comment type="catalytic activity">
    <reaction evidence="1">
        <text>tRNA(Ile) + L-isoleucine + ATP = L-isoleucyl-tRNA(Ile) + AMP + diphosphate</text>
        <dbReference type="Rhea" id="RHEA:11060"/>
        <dbReference type="Rhea" id="RHEA-COMP:9666"/>
        <dbReference type="Rhea" id="RHEA-COMP:9695"/>
        <dbReference type="ChEBI" id="CHEBI:30616"/>
        <dbReference type="ChEBI" id="CHEBI:33019"/>
        <dbReference type="ChEBI" id="CHEBI:58045"/>
        <dbReference type="ChEBI" id="CHEBI:78442"/>
        <dbReference type="ChEBI" id="CHEBI:78528"/>
        <dbReference type="ChEBI" id="CHEBI:456215"/>
        <dbReference type="EC" id="6.1.1.5"/>
    </reaction>
</comment>
<comment type="cofactor">
    <cofactor evidence="1">
        <name>Zn(2+)</name>
        <dbReference type="ChEBI" id="CHEBI:29105"/>
    </cofactor>
    <text evidence="1">Binds 1 zinc ion per subunit.</text>
</comment>
<comment type="subunit">
    <text evidence="1">Monomer.</text>
</comment>
<comment type="subcellular location">
    <subcellularLocation>
        <location evidence="1">Cytoplasm</location>
    </subcellularLocation>
</comment>
<comment type="domain">
    <text evidence="1">IleRS has two distinct active sites: one for aminoacylation and one for editing. The misactivated valine is translocated from the active site to the editing site, which sterically excludes the correctly activated isoleucine. The single editing site contains two valyl binding pockets, one specific for each substrate (Val-AMP or Val-tRNA(Ile)).</text>
</comment>
<comment type="similarity">
    <text evidence="1">Belongs to the class-I aminoacyl-tRNA synthetase family. IleS type 1 subfamily.</text>
</comment>
<protein>
    <recommendedName>
        <fullName evidence="1">Isoleucine--tRNA ligase</fullName>
        <ecNumber evidence="1">6.1.1.5</ecNumber>
    </recommendedName>
    <alternativeName>
        <fullName evidence="1">Isoleucyl-tRNA synthetase</fullName>
        <shortName evidence="1">IleRS</shortName>
    </alternativeName>
</protein>
<keyword id="KW-0030">Aminoacyl-tRNA synthetase</keyword>
<keyword id="KW-0067">ATP-binding</keyword>
<keyword id="KW-0963">Cytoplasm</keyword>
<keyword id="KW-0436">Ligase</keyword>
<keyword id="KW-0479">Metal-binding</keyword>
<keyword id="KW-0547">Nucleotide-binding</keyword>
<keyword id="KW-0648">Protein biosynthesis</keyword>
<keyword id="KW-0862">Zinc</keyword>
<proteinExistence type="inferred from homology"/>